<evidence type="ECO:0000255" key="1">
    <source>
        <dbReference type="HAMAP-Rule" id="MF_00235"/>
    </source>
</evidence>
<keyword id="KW-0067">ATP-binding</keyword>
<keyword id="KW-0963">Cytoplasm</keyword>
<keyword id="KW-0418">Kinase</keyword>
<keyword id="KW-0545">Nucleotide biosynthesis</keyword>
<keyword id="KW-0547">Nucleotide-binding</keyword>
<keyword id="KW-0808">Transferase</keyword>
<comment type="function">
    <text evidence="1">Catalyzes the reversible transfer of the terminal phosphate group between ATP and AMP. Plays an important role in cellular energy homeostasis and in adenine nucleotide metabolism.</text>
</comment>
<comment type="catalytic activity">
    <reaction evidence="1">
        <text>AMP + ATP = 2 ADP</text>
        <dbReference type="Rhea" id="RHEA:12973"/>
        <dbReference type="ChEBI" id="CHEBI:30616"/>
        <dbReference type="ChEBI" id="CHEBI:456215"/>
        <dbReference type="ChEBI" id="CHEBI:456216"/>
        <dbReference type="EC" id="2.7.4.3"/>
    </reaction>
</comment>
<comment type="pathway">
    <text evidence="1">Purine metabolism; AMP biosynthesis via salvage pathway; AMP from ADP: step 1/1.</text>
</comment>
<comment type="subunit">
    <text evidence="1">Monomer.</text>
</comment>
<comment type="subcellular location">
    <subcellularLocation>
        <location evidence="1">Cytoplasm</location>
    </subcellularLocation>
</comment>
<comment type="domain">
    <text evidence="1">Consists of three domains, a large central CORE domain and two small peripheral domains, NMPbind and LID, which undergo movements during catalysis. The LID domain closes over the site of phosphoryl transfer upon ATP binding. Assembling and dissambling the active center during each catalytic cycle provides an effective means to prevent ATP hydrolysis.</text>
</comment>
<comment type="similarity">
    <text evidence="1">Belongs to the adenylate kinase family.</text>
</comment>
<gene>
    <name evidence="1" type="primary">adk</name>
    <name type="ordered locus">YPDSF_2754</name>
</gene>
<sequence>MRIILLGAPGAGKGTQAQFIMEKYGIPQISTGDMLRAAVKAGSELGLKAKEIMDAGKLVTDELVIALVKERITQEDCRDGFLLDGFPRTIPQADAMKEAGIKVDYVLEFDVPDELIVERIVGRRVHAASGRVYHVKFNPPKVEDKDDVTGEELTIRKDDQEATVRKRLIEYHQQTAPLVSYYHKEADAGNTQYFKLDGTRNVAEVSAELATILG</sequence>
<accession>A4TPA4</accession>
<organism>
    <name type="scientific">Yersinia pestis (strain Pestoides F)</name>
    <dbReference type="NCBI Taxonomy" id="386656"/>
    <lineage>
        <taxon>Bacteria</taxon>
        <taxon>Pseudomonadati</taxon>
        <taxon>Pseudomonadota</taxon>
        <taxon>Gammaproteobacteria</taxon>
        <taxon>Enterobacterales</taxon>
        <taxon>Yersiniaceae</taxon>
        <taxon>Yersinia</taxon>
    </lineage>
</organism>
<name>KAD_YERPP</name>
<feature type="chain" id="PRO_1000058944" description="Adenylate kinase">
    <location>
        <begin position="1"/>
        <end position="214"/>
    </location>
</feature>
<feature type="region of interest" description="NMP" evidence="1">
    <location>
        <begin position="30"/>
        <end position="59"/>
    </location>
</feature>
<feature type="region of interest" description="LID">
    <location>
        <begin position="122"/>
        <end position="159"/>
    </location>
</feature>
<feature type="binding site" evidence="1">
    <location>
        <begin position="10"/>
        <end position="15"/>
    </location>
    <ligand>
        <name>ATP</name>
        <dbReference type="ChEBI" id="CHEBI:30616"/>
    </ligand>
</feature>
<feature type="binding site" evidence="1">
    <location>
        <position position="31"/>
    </location>
    <ligand>
        <name>AMP</name>
        <dbReference type="ChEBI" id="CHEBI:456215"/>
    </ligand>
</feature>
<feature type="binding site" evidence="1">
    <location>
        <position position="36"/>
    </location>
    <ligand>
        <name>AMP</name>
        <dbReference type="ChEBI" id="CHEBI:456215"/>
    </ligand>
</feature>
<feature type="binding site" evidence="1">
    <location>
        <begin position="57"/>
        <end position="59"/>
    </location>
    <ligand>
        <name>AMP</name>
        <dbReference type="ChEBI" id="CHEBI:456215"/>
    </ligand>
</feature>
<feature type="binding site" evidence="1">
    <location>
        <begin position="85"/>
        <end position="88"/>
    </location>
    <ligand>
        <name>AMP</name>
        <dbReference type="ChEBI" id="CHEBI:456215"/>
    </ligand>
</feature>
<feature type="binding site" evidence="1">
    <location>
        <position position="92"/>
    </location>
    <ligand>
        <name>AMP</name>
        <dbReference type="ChEBI" id="CHEBI:456215"/>
    </ligand>
</feature>
<feature type="binding site" evidence="1">
    <location>
        <position position="123"/>
    </location>
    <ligand>
        <name>ATP</name>
        <dbReference type="ChEBI" id="CHEBI:30616"/>
    </ligand>
</feature>
<feature type="binding site" evidence="1">
    <location>
        <begin position="132"/>
        <end position="133"/>
    </location>
    <ligand>
        <name>ATP</name>
        <dbReference type="ChEBI" id="CHEBI:30616"/>
    </ligand>
</feature>
<feature type="binding site" evidence="1">
    <location>
        <position position="156"/>
    </location>
    <ligand>
        <name>AMP</name>
        <dbReference type="ChEBI" id="CHEBI:456215"/>
    </ligand>
</feature>
<feature type="binding site" evidence="1">
    <location>
        <position position="167"/>
    </location>
    <ligand>
        <name>AMP</name>
        <dbReference type="ChEBI" id="CHEBI:456215"/>
    </ligand>
</feature>
<feature type="binding site" evidence="1">
    <location>
        <position position="200"/>
    </location>
    <ligand>
        <name>ATP</name>
        <dbReference type="ChEBI" id="CHEBI:30616"/>
    </ligand>
</feature>
<proteinExistence type="inferred from homology"/>
<dbReference type="EC" id="2.7.4.3" evidence="1"/>
<dbReference type="EMBL" id="CP000668">
    <property type="protein sequence ID" value="ABP41116.1"/>
    <property type="molecule type" value="Genomic_DNA"/>
</dbReference>
<dbReference type="RefSeq" id="WP_002208600.1">
    <property type="nucleotide sequence ID" value="NZ_CP009715.1"/>
</dbReference>
<dbReference type="SMR" id="A4TPA4"/>
<dbReference type="GeneID" id="57975593"/>
<dbReference type="KEGG" id="ypp:YPDSF_2754"/>
<dbReference type="PATRIC" id="fig|386656.14.peg.11"/>
<dbReference type="UniPathway" id="UPA00588">
    <property type="reaction ID" value="UER00649"/>
</dbReference>
<dbReference type="GO" id="GO:0005737">
    <property type="term" value="C:cytoplasm"/>
    <property type="evidence" value="ECO:0007669"/>
    <property type="project" value="UniProtKB-SubCell"/>
</dbReference>
<dbReference type="GO" id="GO:0004017">
    <property type="term" value="F:adenylate kinase activity"/>
    <property type="evidence" value="ECO:0007669"/>
    <property type="project" value="UniProtKB-UniRule"/>
</dbReference>
<dbReference type="GO" id="GO:0005524">
    <property type="term" value="F:ATP binding"/>
    <property type="evidence" value="ECO:0007669"/>
    <property type="project" value="UniProtKB-UniRule"/>
</dbReference>
<dbReference type="GO" id="GO:0044209">
    <property type="term" value="P:AMP salvage"/>
    <property type="evidence" value="ECO:0007669"/>
    <property type="project" value="UniProtKB-UniRule"/>
</dbReference>
<dbReference type="CDD" id="cd01428">
    <property type="entry name" value="ADK"/>
    <property type="match status" value="1"/>
</dbReference>
<dbReference type="FunFam" id="3.40.50.300:FF:000106">
    <property type="entry name" value="Adenylate kinase mitochondrial"/>
    <property type="match status" value="1"/>
</dbReference>
<dbReference type="Gene3D" id="3.40.50.300">
    <property type="entry name" value="P-loop containing nucleotide triphosphate hydrolases"/>
    <property type="match status" value="1"/>
</dbReference>
<dbReference type="HAMAP" id="MF_00235">
    <property type="entry name" value="Adenylate_kinase_Adk"/>
    <property type="match status" value="1"/>
</dbReference>
<dbReference type="InterPro" id="IPR006259">
    <property type="entry name" value="Adenyl_kin_sub"/>
</dbReference>
<dbReference type="InterPro" id="IPR000850">
    <property type="entry name" value="Adenylat/UMP-CMP_kin"/>
</dbReference>
<dbReference type="InterPro" id="IPR033690">
    <property type="entry name" value="Adenylat_kinase_CS"/>
</dbReference>
<dbReference type="InterPro" id="IPR007862">
    <property type="entry name" value="Adenylate_kinase_lid-dom"/>
</dbReference>
<dbReference type="InterPro" id="IPR027417">
    <property type="entry name" value="P-loop_NTPase"/>
</dbReference>
<dbReference type="NCBIfam" id="TIGR01351">
    <property type="entry name" value="adk"/>
    <property type="match status" value="1"/>
</dbReference>
<dbReference type="NCBIfam" id="NF001379">
    <property type="entry name" value="PRK00279.1-1"/>
    <property type="match status" value="1"/>
</dbReference>
<dbReference type="NCBIfam" id="NF001380">
    <property type="entry name" value="PRK00279.1-2"/>
    <property type="match status" value="1"/>
</dbReference>
<dbReference type="NCBIfam" id="NF001381">
    <property type="entry name" value="PRK00279.1-3"/>
    <property type="match status" value="1"/>
</dbReference>
<dbReference type="NCBIfam" id="NF011100">
    <property type="entry name" value="PRK14527.1"/>
    <property type="match status" value="1"/>
</dbReference>
<dbReference type="PANTHER" id="PTHR23359">
    <property type="entry name" value="NUCLEOTIDE KINASE"/>
    <property type="match status" value="1"/>
</dbReference>
<dbReference type="Pfam" id="PF00406">
    <property type="entry name" value="ADK"/>
    <property type="match status" value="1"/>
</dbReference>
<dbReference type="Pfam" id="PF05191">
    <property type="entry name" value="ADK_lid"/>
    <property type="match status" value="1"/>
</dbReference>
<dbReference type="PRINTS" id="PR00094">
    <property type="entry name" value="ADENYLTKNASE"/>
</dbReference>
<dbReference type="SUPFAM" id="SSF52540">
    <property type="entry name" value="P-loop containing nucleoside triphosphate hydrolases"/>
    <property type="match status" value="1"/>
</dbReference>
<dbReference type="PROSITE" id="PS00113">
    <property type="entry name" value="ADENYLATE_KINASE"/>
    <property type="match status" value="1"/>
</dbReference>
<reference key="1">
    <citation type="submission" date="2007-02" db="EMBL/GenBank/DDBJ databases">
        <title>Complete sequence of chromosome of Yersinia pestis Pestoides F.</title>
        <authorList>
            <consortium name="US DOE Joint Genome Institute"/>
            <person name="Copeland A."/>
            <person name="Lucas S."/>
            <person name="Lapidus A."/>
            <person name="Barry K."/>
            <person name="Detter J.C."/>
            <person name="Glavina del Rio T."/>
            <person name="Hammon N."/>
            <person name="Israni S."/>
            <person name="Dalin E."/>
            <person name="Tice H."/>
            <person name="Pitluck S."/>
            <person name="Di Bartolo G."/>
            <person name="Chain P."/>
            <person name="Malfatti S."/>
            <person name="Shin M."/>
            <person name="Vergez L."/>
            <person name="Schmutz J."/>
            <person name="Larimer F."/>
            <person name="Land M."/>
            <person name="Hauser L."/>
            <person name="Worsham P."/>
            <person name="Chu M."/>
            <person name="Bearden S."/>
            <person name="Garcia E."/>
            <person name="Richardson P."/>
        </authorList>
    </citation>
    <scope>NUCLEOTIDE SEQUENCE [LARGE SCALE GENOMIC DNA]</scope>
    <source>
        <strain>Pestoides F</strain>
    </source>
</reference>
<protein>
    <recommendedName>
        <fullName evidence="1">Adenylate kinase</fullName>
        <shortName evidence="1">AK</shortName>
        <ecNumber evidence="1">2.7.4.3</ecNumber>
    </recommendedName>
    <alternativeName>
        <fullName evidence="1">ATP-AMP transphosphorylase</fullName>
    </alternativeName>
    <alternativeName>
        <fullName evidence="1">ATP:AMP phosphotransferase</fullName>
    </alternativeName>
    <alternativeName>
        <fullName evidence="1">Adenylate monophosphate kinase</fullName>
    </alternativeName>
</protein>